<protein>
    <recommendedName>
        <fullName>Subtilisin-like protease 12</fullName>
        <ecNumber>3.4.21.-</ecNumber>
    </recommendedName>
</protein>
<accession>D4AQA9</accession>
<name>SUB12_ARTBC</name>
<evidence type="ECO:0000250" key="1"/>
<evidence type="ECO:0000255" key="2"/>
<evidence type="ECO:0000255" key="3">
    <source>
        <dbReference type="PROSITE-ProRule" id="PRU01240"/>
    </source>
</evidence>
<evidence type="ECO:0000305" key="4"/>
<gene>
    <name type="primary">SUB12</name>
    <name type="ORF">ARB_06416</name>
</gene>
<reference key="1">
    <citation type="journal article" date="2011" name="Genome Biol.">
        <title>Comparative and functional genomics provide insights into the pathogenicity of dermatophytic fungi.</title>
        <authorList>
            <person name="Burmester A."/>
            <person name="Shelest E."/>
            <person name="Gloeckner G."/>
            <person name="Heddergott C."/>
            <person name="Schindler S."/>
            <person name="Staib P."/>
            <person name="Heidel A."/>
            <person name="Felder M."/>
            <person name="Petzold A."/>
            <person name="Szafranski K."/>
            <person name="Feuermann M."/>
            <person name="Pedruzzi I."/>
            <person name="Priebe S."/>
            <person name="Groth M."/>
            <person name="Winkler R."/>
            <person name="Li W."/>
            <person name="Kniemeyer O."/>
            <person name="Schroeckh V."/>
            <person name="Hertweck C."/>
            <person name="Hube B."/>
            <person name="White T.C."/>
            <person name="Platzer M."/>
            <person name="Guthke R."/>
            <person name="Heitman J."/>
            <person name="Woestemeyer J."/>
            <person name="Zipfel P.F."/>
            <person name="Monod M."/>
            <person name="Brakhage A.A."/>
        </authorList>
    </citation>
    <scope>NUCLEOTIDE SEQUENCE [LARGE SCALE GENOMIC DNA]</scope>
    <source>
        <strain>ATCC MYA-4681 / CBS 112371</strain>
    </source>
</reference>
<organism>
    <name type="scientific">Arthroderma benhamiae (strain ATCC MYA-4681 / CBS 112371)</name>
    <name type="common">Trichophyton mentagrophytes</name>
    <dbReference type="NCBI Taxonomy" id="663331"/>
    <lineage>
        <taxon>Eukaryota</taxon>
        <taxon>Fungi</taxon>
        <taxon>Dikarya</taxon>
        <taxon>Ascomycota</taxon>
        <taxon>Pezizomycotina</taxon>
        <taxon>Eurotiomycetes</taxon>
        <taxon>Eurotiomycetidae</taxon>
        <taxon>Onygenales</taxon>
        <taxon>Arthrodermataceae</taxon>
        <taxon>Trichophyton</taxon>
    </lineage>
</organism>
<proteinExistence type="inferred from homology"/>
<feature type="signal peptide" evidence="2">
    <location>
        <begin position="1"/>
        <end position="19"/>
    </location>
</feature>
<feature type="propeptide" id="PRO_0000406406" evidence="1">
    <location>
        <begin position="20"/>
        <end position="116"/>
    </location>
</feature>
<feature type="chain" id="PRO_0000406407" description="Subtilisin-like protease 12">
    <location>
        <begin position="117"/>
        <end position="416"/>
    </location>
</feature>
<feature type="domain" description="Inhibitor I9" evidence="2">
    <location>
        <begin position="35"/>
        <end position="115"/>
    </location>
</feature>
<feature type="domain" description="Peptidase S8" evidence="3">
    <location>
        <begin position="125"/>
        <end position="416"/>
    </location>
</feature>
<feature type="active site" description="Charge relay system" evidence="3">
    <location>
        <position position="157"/>
    </location>
</feature>
<feature type="active site" description="Charge relay system" evidence="3">
    <location>
        <position position="188"/>
    </location>
</feature>
<feature type="active site" description="Charge relay system" evidence="3">
    <location>
        <position position="362"/>
    </location>
</feature>
<feature type="glycosylation site" description="N-linked (GlcNAc...) asparagine" evidence="2">
    <location>
        <position position="123"/>
    </location>
</feature>
<feature type="glycosylation site" description="N-linked (GlcNAc...) asparagine" evidence="2">
    <location>
        <position position="136"/>
    </location>
</feature>
<feature type="glycosylation site" description="N-linked (GlcNAc...) asparagine" evidence="2">
    <location>
        <position position="150"/>
    </location>
</feature>
<feature type="glycosylation site" description="N-linked (GlcNAc...) asparagine" evidence="2">
    <location>
        <position position="249"/>
    </location>
</feature>
<feature type="glycosylation site" description="N-linked (GlcNAc...) asparagine" evidence="2">
    <location>
        <position position="305"/>
    </location>
</feature>
<feature type="glycosylation site" description="N-linked (GlcNAc...) asparagine" evidence="2">
    <location>
        <position position="334"/>
    </location>
</feature>
<feature type="glycosylation site" description="N-linked (GlcNAc...) asparagine" evidence="2">
    <location>
        <position position="353"/>
    </location>
</feature>
<feature type="glycosylation site" description="N-linked (GlcNAc...) asparagine" evidence="2">
    <location>
        <position position="404"/>
    </location>
</feature>
<feature type="glycosylation site" description="N-linked (GlcNAc...) asparagine" evidence="2">
    <location>
        <position position="412"/>
    </location>
</feature>
<comment type="function">
    <text evidence="1">Secreted subtilisin-like serine protease with keratinolytic activity that contributes to pathogenicity.</text>
</comment>
<comment type="subcellular location">
    <subcellularLocation>
        <location evidence="1">Secreted</location>
    </subcellularLocation>
</comment>
<comment type="similarity">
    <text evidence="4">Belongs to the peptidase S8 family.</text>
</comment>
<dbReference type="EC" id="3.4.21.-"/>
<dbReference type="EMBL" id="ABSU01000005">
    <property type="protein sequence ID" value="EFE34653.1"/>
    <property type="molecule type" value="Genomic_DNA"/>
</dbReference>
<dbReference type="RefSeq" id="XP_003015293.1">
    <property type="nucleotide sequence ID" value="XM_003015247.1"/>
</dbReference>
<dbReference type="SMR" id="D4AQA9"/>
<dbReference type="GlyCosmos" id="D4AQA9">
    <property type="glycosylation" value="9 sites, No reported glycans"/>
</dbReference>
<dbReference type="GeneID" id="9521017"/>
<dbReference type="KEGG" id="abe:ARB_06416"/>
<dbReference type="eggNOG" id="KOG1153">
    <property type="taxonomic scope" value="Eukaryota"/>
</dbReference>
<dbReference type="HOGENOM" id="CLU_011263_1_3_1"/>
<dbReference type="OMA" id="GRMGVAN"/>
<dbReference type="Proteomes" id="UP000008866">
    <property type="component" value="Unassembled WGS sequence"/>
</dbReference>
<dbReference type="GO" id="GO:0005576">
    <property type="term" value="C:extracellular region"/>
    <property type="evidence" value="ECO:0007669"/>
    <property type="project" value="UniProtKB-SubCell"/>
</dbReference>
<dbReference type="GO" id="GO:0004252">
    <property type="term" value="F:serine-type endopeptidase activity"/>
    <property type="evidence" value="ECO:0007669"/>
    <property type="project" value="InterPro"/>
</dbReference>
<dbReference type="GO" id="GO:0006508">
    <property type="term" value="P:proteolysis"/>
    <property type="evidence" value="ECO:0007669"/>
    <property type="project" value="UniProtKB-KW"/>
</dbReference>
<dbReference type="CDD" id="cd04077">
    <property type="entry name" value="Peptidases_S8_PCSK9_ProteinaseK_like"/>
    <property type="match status" value="1"/>
</dbReference>
<dbReference type="Gene3D" id="3.30.70.80">
    <property type="entry name" value="Peptidase S8 propeptide/proteinase inhibitor I9"/>
    <property type="match status" value="1"/>
</dbReference>
<dbReference type="Gene3D" id="3.40.50.200">
    <property type="entry name" value="Peptidase S8/S53 domain"/>
    <property type="match status" value="1"/>
</dbReference>
<dbReference type="InterPro" id="IPR034193">
    <property type="entry name" value="PCSK9_ProteinaseK-like"/>
</dbReference>
<dbReference type="InterPro" id="IPR000209">
    <property type="entry name" value="Peptidase_S8/S53_dom"/>
</dbReference>
<dbReference type="InterPro" id="IPR036852">
    <property type="entry name" value="Peptidase_S8/S53_dom_sf"/>
</dbReference>
<dbReference type="InterPro" id="IPR023828">
    <property type="entry name" value="Peptidase_S8_Ser-AS"/>
</dbReference>
<dbReference type="InterPro" id="IPR050131">
    <property type="entry name" value="Peptidase_S8_subtilisin-like"/>
</dbReference>
<dbReference type="InterPro" id="IPR015500">
    <property type="entry name" value="Peptidase_S8_subtilisin-rel"/>
</dbReference>
<dbReference type="InterPro" id="IPR010259">
    <property type="entry name" value="S8pro/Inhibitor_I9"/>
</dbReference>
<dbReference type="InterPro" id="IPR037045">
    <property type="entry name" value="S8pro/Inhibitor_I9_sf"/>
</dbReference>
<dbReference type="PANTHER" id="PTHR43806:SF11">
    <property type="entry name" value="CEREVISIN-RELATED"/>
    <property type="match status" value="1"/>
</dbReference>
<dbReference type="PANTHER" id="PTHR43806">
    <property type="entry name" value="PEPTIDASE S8"/>
    <property type="match status" value="1"/>
</dbReference>
<dbReference type="Pfam" id="PF05922">
    <property type="entry name" value="Inhibitor_I9"/>
    <property type="match status" value="1"/>
</dbReference>
<dbReference type="Pfam" id="PF00082">
    <property type="entry name" value="Peptidase_S8"/>
    <property type="match status" value="1"/>
</dbReference>
<dbReference type="PRINTS" id="PR00723">
    <property type="entry name" value="SUBTILISIN"/>
</dbReference>
<dbReference type="SUPFAM" id="SSF54897">
    <property type="entry name" value="Protease propeptides/inhibitors"/>
    <property type="match status" value="1"/>
</dbReference>
<dbReference type="SUPFAM" id="SSF52743">
    <property type="entry name" value="Subtilisin-like"/>
    <property type="match status" value="1"/>
</dbReference>
<dbReference type="PROSITE" id="PS51892">
    <property type="entry name" value="SUBTILASE"/>
    <property type="match status" value="1"/>
</dbReference>
<dbReference type="PROSITE" id="PS00138">
    <property type="entry name" value="SUBTILASE_SER"/>
    <property type="match status" value="1"/>
</dbReference>
<keyword id="KW-0325">Glycoprotein</keyword>
<keyword id="KW-0378">Hydrolase</keyword>
<keyword id="KW-0645">Protease</keyword>
<keyword id="KW-1185">Reference proteome</keyword>
<keyword id="KW-0964">Secreted</keyword>
<keyword id="KW-0720">Serine protease</keyword>
<keyword id="KW-0732">Signal</keyword>
<keyword id="KW-0843">Virulence</keyword>
<keyword id="KW-0865">Zymogen</keyword>
<sequence>MSILKMMLIYFAIFWVVNAAQLLDIDSQGVIPGAYIVVMKDRVSSLEFSSHVRWLKRTHRRNLAKRATPFTEGLGATWDIAGWQAYSGSFDEDTVQEILNHENVEFVEPNKEMQVASTIKQGNVTWGLSRISHKENSSHDYVSTYGEGENITFYGIDSGIDINQADFTGRARWGINLADHVDTDCNGHGTHTAGTVAGQKFGILKKASIVSIKILDCYGYGDITRYINGLNWAINDAKERGLLGKSVMNISLKTRRSRAVNEATVRAQEAGIFIAVAAGNQATSAEFYSPGSAPEVCTVGASTRNDTKAIFSNYGELGMSWSCILFYTTGTNVNHTVDLFAPGEYIRSTLPHNLTGLMSGTSMATPHVCGVGGLIMATEGLAPEKVCDRLKELANPTIQNPGFNTTNKLLYNGSGA</sequence>